<feature type="chain" id="PRO_0000187632" description="Uroporphyrinogen decarboxylase">
    <location>
        <begin position="1"/>
        <end position="343"/>
    </location>
</feature>
<feature type="binding site" evidence="1">
    <location>
        <begin position="23"/>
        <end position="27"/>
    </location>
    <ligand>
        <name>substrate</name>
    </ligand>
</feature>
<feature type="binding site" evidence="1">
    <location>
        <position position="42"/>
    </location>
    <ligand>
        <name>substrate</name>
    </ligand>
</feature>
<feature type="binding site" evidence="1">
    <location>
        <position position="73"/>
    </location>
    <ligand>
        <name>substrate</name>
    </ligand>
</feature>
<feature type="binding site" evidence="1">
    <location>
        <position position="150"/>
    </location>
    <ligand>
        <name>substrate</name>
    </ligand>
</feature>
<feature type="binding site" evidence="1">
    <location>
        <position position="205"/>
    </location>
    <ligand>
        <name>substrate</name>
    </ligand>
</feature>
<feature type="binding site" evidence="1">
    <location>
        <position position="322"/>
    </location>
    <ligand>
        <name>substrate</name>
    </ligand>
</feature>
<feature type="site" description="Transition state stabilizer" evidence="1">
    <location>
        <position position="73"/>
    </location>
</feature>
<feature type="sequence conflict" description="In Ref. 2; AA sequence." evidence="3" ref="2">
    <original>P</original>
    <variation>S</variation>
    <location>
        <position position="18"/>
    </location>
</feature>
<feature type="sequence conflict" description="In Ref. 2; AA sequence." evidence="3" ref="2">
    <original>R</original>
    <variation>P</variation>
    <location>
        <position position="27"/>
    </location>
</feature>
<reference key="1">
    <citation type="submission" date="2005-09" db="EMBL/GenBank/DDBJ databases">
        <title>Complete sequence of chromosome 1 of Rhodobacter sphaeroides 2.4.1.</title>
        <authorList>
            <person name="Copeland A."/>
            <person name="Lucas S."/>
            <person name="Lapidus A."/>
            <person name="Barry K."/>
            <person name="Detter J.C."/>
            <person name="Glavina T."/>
            <person name="Hammon N."/>
            <person name="Israni S."/>
            <person name="Pitluck S."/>
            <person name="Richardson P."/>
            <person name="Mackenzie C."/>
            <person name="Choudhary M."/>
            <person name="Larimer F."/>
            <person name="Hauser L.J."/>
            <person name="Land M."/>
            <person name="Donohue T.J."/>
            <person name="Kaplan S."/>
        </authorList>
    </citation>
    <scope>NUCLEOTIDE SEQUENCE [LARGE SCALE GENOMIC DNA]</scope>
    <source>
        <strain>ATCC 17023 / DSM 158 / JCM 6121 / CCUG 31486 / LMG 2827 / NBRC 12203 / NCIMB 8253 / ATH 2.4.1.</strain>
    </source>
</reference>
<reference key="2">
    <citation type="journal article" date="1993" name="Biochem. J.">
        <title>Purification and properties of the uroporphyrinogen decarboxylase from Rhodobacter sphaeroides.</title>
        <authorList>
            <person name="Jones R.M."/>
            <person name="Jordan P.M."/>
        </authorList>
    </citation>
    <scope>PROTEIN SEQUENCE OF 4-30</scope>
    <scope>FUNCTION</scope>
    <scope>BIOPHYSICOCHEMICAL PROPERTIES</scope>
    <scope>ACTIVITY REGULATION</scope>
</reference>
<protein>
    <recommendedName>
        <fullName>Uroporphyrinogen decarboxylase</fullName>
        <shortName>UPD</shortName>
        <shortName>URO-D</shortName>
        <ecNumber>4.1.1.37</ecNumber>
    </recommendedName>
</protein>
<sequence length="343" mass="37575">MTKTMLRALKGETLPTPPIWLMRQAGRYLPEYRATRAQAGDFLSLCYTPDLAAEVTLQPIRRYGFDAAILFADILLLPQALGADLWFETGEGPRMSTITDMAGVTALKGRDDIHETLAPVYETCRILARELPKETTFIGFAGMPWTVATYMIAGRGSKDQAAAHKLKDTDRPAFEALMDRVTEATIEYLAKQVEAGCEVVKLFDSWAGSLKGQDFEDFAVAPAKRIVSELKARFQGLPVIAFPREAGEGYIGFAEKTGADCVAIDNSVSPEWAAEKVQAGRTCVQGNLDPKYMVTGGEELVQATKRVVEAFRNGPHIFNLGHGITPEADPENVTLLVETIRGK</sequence>
<evidence type="ECO:0000250" key="1"/>
<evidence type="ECO:0000269" key="2">
    <source>
    </source>
</evidence>
<evidence type="ECO:0000305" key="3"/>
<keyword id="KW-0963">Cytoplasm</keyword>
<keyword id="KW-0210">Decarboxylase</keyword>
<keyword id="KW-0903">Direct protein sequencing</keyword>
<keyword id="KW-0456">Lyase</keyword>
<keyword id="KW-0627">Porphyrin biosynthesis</keyword>
<keyword id="KW-1185">Reference proteome</keyword>
<organism>
    <name type="scientific">Cereibacter sphaeroides (strain ATCC 17023 / DSM 158 / JCM 6121 / CCUG 31486 / LMG 2827 / NBRC 12203 / NCIMB 8253 / ATH 2.4.1.)</name>
    <name type="common">Rhodobacter sphaeroides</name>
    <dbReference type="NCBI Taxonomy" id="272943"/>
    <lineage>
        <taxon>Bacteria</taxon>
        <taxon>Pseudomonadati</taxon>
        <taxon>Pseudomonadota</taxon>
        <taxon>Alphaproteobacteria</taxon>
        <taxon>Rhodobacterales</taxon>
        <taxon>Paracoccaceae</taxon>
        <taxon>Cereibacter</taxon>
    </lineage>
</organism>
<gene>
    <name type="primary">hemE</name>
    <name type="ordered locus">RHOS4_22880</name>
    <name type="ORF">RSP_0680</name>
</gene>
<accession>P32920</accession>
<accession>Q3J028</accession>
<dbReference type="EC" id="4.1.1.37"/>
<dbReference type="EMBL" id="CP000143">
    <property type="protein sequence ID" value="ABA79856.1"/>
    <property type="molecule type" value="Genomic_DNA"/>
</dbReference>
<dbReference type="PIR" id="S35595">
    <property type="entry name" value="S35595"/>
</dbReference>
<dbReference type="RefSeq" id="WP_011338412.1">
    <property type="nucleotide sequence ID" value="NC_007493.2"/>
</dbReference>
<dbReference type="RefSeq" id="YP_353757.1">
    <property type="nucleotide sequence ID" value="NC_007493.2"/>
</dbReference>
<dbReference type="SMR" id="P32920"/>
<dbReference type="STRING" id="272943.RSP_0680"/>
<dbReference type="EnsemblBacteria" id="ABA79856">
    <property type="protein sequence ID" value="ABA79856"/>
    <property type="gene ID" value="RSP_0680"/>
</dbReference>
<dbReference type="GeneID" id="3718330"/>
<dbReference type="KEGG" id="rsp:RSP_0680"/>
<dbReference type="PATRIC" id="fig|272943.9.peg.2632"/>
<dbReference type="eggNOG" id="COG0407">
    <property type="taxonomic scope" value="Bacteria"/>
</dbReference>
<dbReference type="OrthoDB" id="9806656at2"/>
<dbReference type="PhylomeDB" id="P32920"/>
<dbReference type="UniPathway" id="UPA00251">
    <property type="reaction ID" value="UER00321"/>
</dbReference>
<dbReference type="Proteomes" id="UP000002703">
    <property type="component" value="Chromosome 1"/>
</dbReference>
<dbReference type="GO" id="GO:0005829">
    <property type="term" value="C:cytosol"/>
    <property type="evidence" value="ECO:0007669"/>
    <property type="project" value="TreeGrafter"/>
</dbReference>
<dbReference type="GO" id="GO:0004853">
    <property type="term" value="F:uroporphyrinogen decarboxylase activity"/>
    <property type="evidence" value="ECO:0007669"/>
    <property type="project" value="UniProtKB-UniRule"/>
</dbReference>
<dbReference type="GO" id="GO:0019353">
    <property type="term" value="P:protoporphyrinogen IX biosynthetic process from glutamate"/>
    <property type="evidence" value="ECO:0007669"/>
    <property type="project" value="TreeGrafter"/>
</dbReference>
<dbReference type="CDD" id="cd00717">
    <property type="entry name" value="URO-D"/>
    <property type="match status" value="1"/>
</dbReference>
<dbReference type="Gene3D" id="3.20.20.210">
    <property type="match status" value="1"/>
</dbReference>
<dbReference type="HAMAP" id="MF_00218">
    <property type="entry name" value="URO_D"/>
    <property type="match status" value="1"/>
</dbReference>
<dbReference type="InterPro" id="IPR038071">
    <property type="entry name" value="UROD/MetE-like_sf"/>
</dbReference>
<dbReference type="InterPro" id="IPR006361">
    <property type="entry name" value="Uroporphyrinogen_deCO2ase_HemE"/>
</dbReference>
<dbReference type="InterPro" id="IPR000257">
    <property type="entry name" value="Uroporphyrinogen_deCOase"/>
</dbReference>
<dbReference type="NCBIfam" id="TIGR01464">
    <property type="entry name" value="hemE"/>
    <property type="match status" value="1"/>
</dbReference>
<dbReference type="PANTHER" id="PTHR21091">
    <property type="entry name" value="METHYLTETRAHYDROFOLATE:HOMOCYSTEINE METHYLTRANSFERASE RELATED"/>
    <property type="match status" value="1"/>
</dbReference>
<dbReference type="PANTHER" id="PTHR21091:SF169">
    <property type="entry name" value="UROPORPHYRINOGEN DECARBOXYLASE"/>
    <property type="match status" value="1"/>
</dbReference>
<dbReference type="Pfam" id="PF01208">
    <property type="entry name" value="URO-D"/>
    <property type="match status" value="1"/>
</dbReference>
<dbReference type="SUPFAM" id="SSF51726">
    <property type="entry name" value="UROD/MetE-like"/>
    <property type="match status" value="1"/>
</dbReference>
<dbReference type="PROSITE" id="PS00906">
    <property type="entry name" value="UROD_1"/>
    <property type="match status" value="1"/>
</dbReference>
<dbReference type="PROSITE" id="PS00907">
    <property type="entry name" value="UROD_2"/>
    <property type="match status" value="1"/>
</dbReference>
<comment type="function">
    <text evidence="2">Catalyzes the decarboxylation of four acetate groups of uroporphyrinogen-III to yield coproporphyrinogen-III.</text>
</comment>
<comment type="catalytic activity">
    <reaction>
        <text>uroporphyrinogen III + 4 H(+) = coproporphyrinogen III + 4 CO2</text>
        <dbReference type="Rhea" id="RHEA:19865"/>
        <dbReference type="ChEBI" id="CHEBI:15378"/>
        <dbReference type="ChEBI" id="CHEBI:16526"/>
        <dbReference type="ChEBI" id="CHEBI:57308"/>
        <dbReference type="ChEBI" id="CHEBI:57309"/>
        <dbReference type="EC" id="4.1.1.37"/>
    </reaction>
</comment>
<comment type="activity regulation">
    <text evidence="2">Inhibited by N-ethyl-maleimide and phenylglyoxal.</text>
</comment>
<comment type="biophysicochemical properties">
    <kinetics>
        <KM evidence="2">1.8 uM for uroporphyrinogen I</KM>
        <KM evidence="2">6 uM for uroporphyrinogen III</KM>
    </kinetics>
    <phDependence>
        <text evidence="2">Optimum pH is 6.7-6.9.</text>
    </phDependence>
</comment>
<comment type="pathway">
    <text>Porphyrin-containing compound metabolism; protoporphyrin-IX biosynthesis; coproporphyrinogen-III from 5-aminolevulinate: step 4/4.</text>
</comment>
<comment type="subunit">
    <text evidence="1">Homodimer.</text>
</comment>
<comment type="subcellular location">
    <subcellularLocation>
        <location evidence="1">Cytoplasm</location>
    </subcellularLocation>
</comment>
<comment type="similarity">
    <text evidence="3">Belongs to the uroporphyrinogen decarboxylase family.</text>
</comment>
<proteinExistence type="evidence at protein level"/>
<name>DCUP_CERS4</name>